<gene>
    <name evidence="1" type="primary">FUT6</name>
</gene>
<proteinExistence type="inferred from homology"/>
<sequence length="359" mass="41688">MDPLGPAKPQWSCRCCLTTLLFQLLVAVCFFSYLRVSRDDPTVYPNGSRFPDSTGTPARSIPLILLWTWPFNKPTALPRCSEMLPGTADCNITADRKVYPQADAVIVHHREVMYNPSAQLPRSPRRQGQRWIWFSMESPSHCWQLKAMDGYFNLTMSYRSDSDIFTPYGWLEPWSGQPAHPPLNLSAKTELVAWAVSGWGPNSARVRYYQSLQAHLKVDVYGRSHKSLPQGTMMETLSRYKFYLAFENSLHPDYITEKLWRNALEAWAVPVVLGPSRSNYERFLPPDAFIHVDDFQSPKDLARYLQELDKDHARYLSYFGWRETLRPRSFSWALAFCKACWKLQEESRYQTRSITAWFT</sequence>
<accession>Q8HYJ6</accession>
<reference key="1">
    <citation type="journal article" date="2004" name="Glycobiology">
        <title>Structure/function study of Lewis alpha3- and alpha3/4-fucosyltransferases: the alpha1,4 fucosylation requires an aromatic residue in the acceptor-binding domain.</title>
        <authorList>
            <person name="Dupuy F."/>
            <person name="Germot A."/>
            <person name="Julien R."/>
            <person name="Maftah A."/>
        </authorList>
    </citation>
    <scope>NUCLEOTIDE SEQUENCE [GENOMIC DNA]</scope>
</reference>
<evidence type="ECO:0000250" key="1">
    <source>
        <dbReference type="UniProtKB" id="P51993"/>
    </source>
</evidence>
<evidence type="ECO:0000255" key="2"/>
<evidence type="ECO:0000305" key="3"/>
<name>FUT6_GORGO</name>
<dbReference type="EC" id="2.4.1.152" evidence="1"/>
<dbReference type="EMBL" id="AF515437">
    <property type="protein sequence ID" value="AAO15993.1"/>
    <property type="molecule type" value="Genomic_DNA"/>
</dbReference>
<dbReference type="SMR" id="Q8HYJ6"/>
<dbReference type="FunCoup" id="Q8HYJ6">
    <property type="interactions" value="121"/>
</dbReference>
<dbReference type="STRING" id="9593.ENSGGOP00000006122"/>
<dbReference type="CAZy" id="GT10">
    <property type="family name" value="Glycosyltransferase Family 10"/>
</dbReference>
<dbReference type="GlyCosmos" id="Q8HYJ6">
    <property type="glycosylation" value="4 sites, No reported glycans"/>
</dbReference>
<dbReference type="eggNOG" id="KOG2619">
    <property type="taxonomic scope" value="Eukaryota"/>
</dbReference>
<dbReference type="InParanoid" id="Q8HYJ6"/>
<dbReference type="BRENDA" id="2.4.1.65">
    <property type="organism ID" value="2496"/>
</dbReference>
<dbReference type="UniPathway" id="UPA00378"/>
<dbReference type="Proteomes" id="UP000001519">
    <property type="component" value="Unplaced"/>
</dbReference>
<dbReference type="GO" id="GO:0005576">
    <property type="term" value="C:extracellular region"/>
    <property type="evidence" value="ECO:0000250"/>
    <property type="project" value="UniProtKB"/>
</dbReference>
<dbReference type="GO" id="GO:0005794">
    <property type="term" value="C:Golgi apparatus"/>
    <property type="evidence" value="ECO:0000250"/>
    <property type="project" value="UniProtKB"/>
</dbReference>
<dbReference type="GO" id="GO:0032580">
    <property type="term" value="C:Golgi cisterna membrane"/>
    <property type="evidence" value="ECO:0007669"/>
    <property type="project" value="UniProtKB-SubCell"/>
</dbReference>
<dbReference type="GO" id="GO:0017083">
    <property type="term" value="F:4-galactosyl-N-acetylglucosaminide 3-alpha-L-fucosyltransferase activity"/>
    <property type="evidence" value="ECO:0000250"/>
    <property type="project" value="UniProtKB"/>
</dbReference>
<dbReference type="GO" id="GO:0046920">
    <property type="term" value="F:alpha-(1-&gt;3)-fucosyltransferase activity"/>
    <property type="evidence" value="ECO:0000318"/>
    <property type="project" value="GO_Central"/>
</dbReference>
<dbReference type="GO" id="GO:0036065">
    <property type="term" value="P:fucosylation"/>
    <property type="evidence" value="ECO:0000318"/>
    <property type="project" value="GO_Central"/>
</dbReference>
<dbReference type="GO" id="GO:0006688">
    <property type="term" value="P:glycosphingolipid biosynthetic process"/>
    <property type="evidence" value="ECO:0000250"/>
    <property type="project" value="UniProtKB"/>
</dbReference>
<dbReference type="GO" id="GO:0036071">
    <property type="term" value="P:N-glycan fucosylation"/>
    <property type="evidence" value="ECO:0000250"/>
    <property type="project" value="UniProtKB"/>
</dbReference>
<dbReference type="GO" id="GO:0006487">
    <property type="term" value="P:protein N-linked glycosylation"/>
    <property type="evidence" value="ECO:0000250"/>
    <property type="project" value="UniProtKB"/>
</dbReference>
<dbReference type="GO" id="GO:0006493">
    <property type="term" value="P:protein O-linked glycosylation"/>
    <property type="evidence" value="ECO:0000250"/>
    <property type="project" value="UniProtKB"/>
</dbReference>
<dbReference type="FunFam" id="3.40.50.11660:FF:000001">
    <property type="entry name" value="alpha-(1,3)-fucosyltransferase 9"/>
    <property type="match status" value="1"/>
</dbReference>
<dbReference type="Gene3D" id="3.40.50.11660">
    <property type="entry name" value="Glycosyl transferase family 10, C-terminal domain"/>
    <property type="match status" value="1"/>
</dbReference>
<dbReference type="InterPro" id="IPR055270">
    <property type="entry name" value="Glyco_tran_10_C"/>
</dbReference>
<dbReference type="InterPro" id="IPR031481">
    <property type="entry name" value="Glyco_tran_10_N"/>
</dbReference>
<dbReference type="InterPro" id="IPR001503">
    <property type="entry name" value="Glyco_trans_10"/>
</dbReference>
<dbReference type="InterPro" id="IPR038577">
    <property type="entry name" value="GT10-like_C_sf"/>
</dbReference>
<dbReference type="PANTHER" id="PTHR11929:SF227">
    <property type="entry name" value="4-GALACTOSYL-N-ACETYLGLUCOSAMINIDE 3-ALPHA-L-FUCOSYLTRANSFERASE FUT6"/>
    <property type="match status" value="1"/>
</dbReference>
<dbReference type="PANTHER" id="PTHR11929">
    <property type="entry name" value="ALPHA- 1,3 -FUCOSYLTRANSFERASE"/>
    <property type="match status" value="1"/>
</dbReference>
<dbReference type="Pfam" id="PF17039">
    <property type="entry name" value="Glyco_tran_10_N"/>
    <property type="match status" value="1"/>
</dbReference>
<dbReference type="Pfam" id="PF00852">
    <property type="entry name" value="Glyco_transf_10"/>
    <property type="match status" value="1"/>
</dbReference>
<dbReference type="SUPFAM" id="SSF53756">
    <property type="entry name" value="UDP-Glycosyltransferase/glycogen phosphorylase"/>
    <property type="match status" value="1"/>
</dbReference>
<comment type="function">
    <text evidence="1">Catalyzes the transfer of L-fucose, from a guanosine diphosphate-beta-L-fucose, to the N-acetyl glucosamine (GlcNAc) of a distal alpha2,3 sialylated lactosamine unit of a glycoprotein- or glycolipid-linked sialopolylactosamines chain or of a distal or internal lactosamine unit of a neutral glycoprotein- or glycolipid-linked polylactosamines chain through an alpha-1,3 glycosidic linkage and participates in surface expression of the sialyl Lewis X (sLe(x)), Lewis X (Le(x)) and non sialylated VIM2 determinants. Moreover transfers fucose to H-type 2 (Fucalpha1-2Galbeta1-4GlcNAc) chain acceptor substrates and participates in difucosylated sialyl Lewis x determinants. Also fucosylates a polylactosamine substrate having a 6 sulfate modification at the GlcNAc moiety and gives rise to sialyl and non-sialyl 6-sulfo lewis X. Does not have activity towards type 1 ((Galbeta1-3GlcNAc)) and H-type 1 chain (Fucalpha1-2Galbeta1-3GlcNAc) acceptors substrates.</text>
</comment>
<comment type="catalytic activity">
    <reaction evidence="1">
        <text>a beta-D-galactosyl-(1-&gt;4)-N-acetyl-beta-D-glucosaminyl derivative + GDP-beta-L-fucose = a beta-D-galactosyl-(1-&gt;4)-[alpha-L-fucosyl-(1-&gt;3)]-N-acetyl-beta-D-glucosaminyl derivative + GDP + H(+)</text>
        <dbReference type="Rhea" id="RHEA:14257"/>
        <dbReference type="ChEBI" id="CHEBI:15378"/>
        <dbReference type="ChEBI" id="CHEBI:57273"/>
        <dbReference type="ChEBI" id="CHEBI:58189"/>
        <dbReference type="ChEBI" id="CHEBI:133507"/>
        <dbReference type="ChEBI" id="CHEBI:137941"/>
        <dbReference type="EC" id="2.4.1.152"/>
    </reaction>
    <physiologicalReaction direction="left-to-right" evidence="1">
        <dbReference type="Rhea" id="RHEA:14258"/>
    </physiologicalReaction>
</comment>
<comment type="catalytic activity">
    <reaction evidence="1">
        <text>an N-acetyl-alpha-neuraminyl-(2-&gt;3)-beta-D-galactosyl-(1-&gt;4)-N-acetyl-beta-D-glucosaminyl derivative + GDP-beta-L-fucose = an alpha-Neu5Ac-(2-&gt;3)-beta-D-Gal-(1-&gt;4)-[alpha-L-Fuc-(1-&gt;3)]-beta-D-GlcNAc derivative + GDP + H(+)</text>
        <dbReference type="Rhea" id="RHEA:56076"/>
        <dbReference type="ChEBI" id="CHEBI:15378"/>
        <dbReference type="ChEBI" id="CHEBI:57273"/>
        <dbReference type="ChEBI" id="CHEBI:58189"/>
        <dbReference type="ChEBI" id="CHEBI:136545"/>
        <dbReference type="ChEBI" id="CHEBI:139509"/>
    </reaction>
    <physiologicalReaction direction="left-to-right" evidence="1">
        <dbReference type="Rhea" id="RHEA:56077"/>
    </physiologicalReaction>
</comment>
<comment type="catalytic activity">
    <reaction evidence="1">
        <text>an alpha-Neu5Ac-(2-&gt;3)-beta-D-Gal-(1-&gt;4)-beta-D-GlcNAc-(1-&gt;3)-beta-D-Gal-(1-&gt;4)-[alpha-L-Fuc-(1-&gt;3)]-beta-D-GlcNAc derivative + GDP-beta-L-fucose = an alpha-Neu5Ac-(2-&gt;3)-beta-D-Gal-(1-&gt;4)-[alpha-L-Fuc-(1-&gt;3)]-beta-D-GlcNAc-(1-&gt;3)-beta-D-Gal-(1-&gt;4)-[alpha-L-Fuc-(1-&gt;3)]-beta-D-GlcNAc derivative + GDP + H(+)</text>
        <dbReference type="Rhea" id="RHEA:52864"/>
        <dbReference type="ChEBI" id="CHEBI:15378"/>
        <dbReference type="ChEBI" id="CHEBI:57273"/>
        <dbReference type="ChEBI" id="CHEBI:58189"/>
        <dbReference type="ChEBI" id="CHEBI:145342"/>
        <dbReference type="ChEBI" id="CHEBI:145343"/>
    </reaction>
    <physiologicalReaction direction="left-to-right" evidence="1">
        <dbReference type="Rhea" id="RHEA:52865"/>
    </physiologicalReaction>
</comment>
<comment type="catalytic activity">
    <reaction evidence="1">
        <text>a neolactoside nLc6Cer + GDP-beta-L-fucose = beta-D-Gal-(1-&gt;4)-[alpha-L-Fuc-(1-&gt;3)]-beta-D-GlcNAc-(1-&gt;3)-beta-D-Gal-(1-&gt;4)-beta-D-GlcNAc-(1-&gt;3)-beta-D-Gal-(1-&gt;4)-beta-D-Glc-(1&lt;-&gt;1')-Cer + GDP + H(+)</text>
        <dbReference type="Rhea" id="RHEA:48368"/>
        <dbReference type="ChEBI" id="CHEBI:15378"/>
        <dbReference type="ChEBI" id="CHEBI:57273"/>
        <dbReference type="ChEBI" id="CHEBI:58189"/>
        <dbReference type="ChEBI" id="CHEBI:90357"/>
        <dbReference type="ChEBI" id="CHEBI:90360"/>
    </reaction>
    <physiologicalReaction direction="left-to-right" evidence="1">
        <dbReference type="Rhea" id="RHEA:48369"/>
    </physiologicalReaction>
</comment>
<comment type="catalytic activity">
    <reaction evidence="1">
        <text>a neolactoside nLc6Cer + GDP-beta-L-fucose = beta-D-galactosyl-(1-&gt;4)-N-acetyl-beta-D-glucosaminyl-(1-&gt;3)-beta-D-galactosyl-(1-&gt;4)-[alpha-L-fucosyl-(1-&gt;3)]-N-acetyl-beta-D-glucosaminyl-(1-&gt;3)-beta-D-galactosyl-(1-&gt;4)-beta-D-glucosyl-(1&lt;-&gt;1')-ceramide + GDP + H(+)</text>
        <dbReference type="Rhea" id="RHEA:48364"/>
        <dbReference type="ChEBI" id="CHEBI:15378"/>
        <dbReference type="ChEBI" id="CHEBI:57273"/>
        <dbReference type="ChEBI" id="CHEBI:58189"/>
        <dbReference type="ChEBI" id="CHEBI:90357"/>
        <dbReference type="ChEBI" id="CHEBI:90358"/>
    </reaction>
    <physiologicalReaction direction="left-to-right" evidence="1">
        <dbReference type="Rhea" id="RHEA:48365"/>
    </physiologicalReaction>
</comment>
<comment type="catalytic activity">
    <reaction evidence="1">
        <text>a neolactoside VI(3)-alpha-NeuNAc-nLc6Cer + GDP-beta-L-fucose = a neolactoside VI(3)-alpha-NeuAc,V(3)-alphaFuc-nLc6Cer + GDP + H(+)</text>
        <dbReference type="Rhea" id="RHEA:48356"/>
        <dbReference type="ChEBI" id="CHEBI:15378"/>
        <dbReference type="ChEBI" id="CHEBI:57273"/>
        <dbReference type="ChEBI" id="CHEBI:58189"/>
        <dbReference type="ChEBI" id="CHEBI:90336"/>
        <dbReference type="ChEBI" id="CHEBI:90339"/>
    </reaction>
    <physiologicalReaction direction="left-to-right" evidence="1">
        <dbReference type="Rhea" id="RHEA:48357"/>
    </physiologicalReaction>
</comment>
<comment type="catalytic activity">
    <reaction evidence="1">
        <text>beta-D-galactosyl-(1-&gt;4)-N-acetyl-D-glucosamine + GDP-beta-L-fucose = beta-D-galactosyl-(1-&gt;4)-[alpha-L-fucosyl-(1-&gt;3)]-N-acetyl-D-glucosamine + GDP + H(+)</text>
        <dbReference type="Rhea" id="RHEA:62824"/>
        <dbReference type="ChEBI" id="CHEBI:15378"/>
        <dbReference type="ChEBI" id="CHEBI:57273"/>
        <dbReference type="ChEBI" id="CHEBI:58189"/>
        <dbReference type="ChEBI" id="CHEBI:60152"/>
        <dbReference type="ChEBI" id="CHEBI:62287"/>
    </reaction>
    <physiologicalReaction direction="left-to-right" evidence="1">
        <dbReference type="Rhea" id="RHEA:62825"/>
    </physiologicalReaction>
</comment>
<comment type="catalytic activity">
    <reaction evidence="1">
        <text>N-acetyl-alpha-neuraminosyl-(2-&gt;3)-beta-D-galactosyl-(1-&gt;4)-N-acetyl-beta-D-glucosamine + GDP-beta-L-fucose = N-acetyl-alpha-neuraminosyl-(2-&gt;3)-beta-D-galactosyl-(1-&gt;4)-[alpha-L-fucosyl-(1-&gt;3)]-N-acetyl-beta-D-glucosamine + GDP + H(+)</text>
        <dbReference type="Rhea" id="RHEA:62836"/>
        <dbReference type="ChEBI" id="CHEBI:15378"/>
        <dbReference type="ChEBI" id="CHEBI:57273"/>
        <dbReference type="ChEBI" id="CHEBI:58189"/>
        <dbReference type="ChEBI" id="CHEBI:145937"/>
        <dbReference type="ChEBI" id="CHEBI:145938"/>
    </reaction>
    <physiologicalReaction direction="left-to-right" evidence="1">
        <dbReference type="Rhea" id="RHEA:62837"/>
    </physiologicalReaction>
</comment>
<comment type="catalytic activity">
    <reaction evidence="1">
        <text>lactose + GDP-beta-L-fucose = beta-D-galactosyl-(1-&gt;4)-[alpha-L-fucosyl-(1-&gt;3)]-D-glucose + GDP + H(+)</text>
        <dbReference type="Rhea" id="RHEA:62888"/>
        <dbReference type="ChEBI" id="CHEBI:15378"/>
        <dbReference type="ChEBI" id="CHEBI:17716"/>
        <dbReference type="ChEBI" id="CHEBI:57273"/>
        <dbReference type="ChEBI" id="CHEBI:58189"/>
        <dbReference type="ChEBI" id="CHEBI:90065"/>
    </reaction>
    <physiologicalReaction direction="left-to-right" evidence="1">
        <dbReference type="Rhea" id="RHEA:62889"/>
    </physiologicalReaction>
</comment>
<comment type="catalytic activity">
    <reaction evidence="1">
        <text>alpha-L-Fuc-(1-&gt;2)-beta-D-Gal-(1-&gt;4)-D-Glc + GDP-beta-L-fucose = alpha-L-Fuc-(1-&gt;2)-beta-D-Gal-(1-&gt;4)-[alpha-L-Fuc-(1-&gt;3)]-D-Glc + GDP + H(+)</text>
        <dbReference type="Rhea" id="RHEA:64016"/>
        <dbReference type="ChEBI" id="CHEBI:15378"/>
        <dbReference type="ChEBI" id="CHEBI:57273"/>
        <dbReference type="ChEBI" id="CHEBI:58189"/>
        <dbReference type="ChEBI" id="CHEBI:147155"/>
        <dbReference type="ChEBI" id="CHEBI:149659"/>
    </reaction>
    <physiologicalReaction direction="left-to-right" evidence="1">
        <dbReference type="Rhea" id="RHEA:64017"/>
    </physiologicalReaction>
</comment>
<comment type="catalytic activity">
    <reaction evidence="1">
        <text>a beta-D-galactosyl-(1-&gt;4)-N-acetyl-beta-D-6-sulfooxy-glucosaminyl derivative + GDP-beta-L-fucose = a beta-D-galactosyl-(1-&gt;4)-[alpha-L-fucosyl-(1-&gt;3)]-N-acetyl-beta-D-6-sulfooxy-glucosaminyl derivative + GDP + H(+)</text>
        <dbReference type="Rhea" id="RHEA:64032"/>
        <dbReference type="ChEBI" id="CHEBI:15378"/>
        <dbReference type="ChEBI" id="CHEBI:57273"/>
        <dbReference type="ChEBI" id="CHEBI:58189"/>
        <dbReference type="ChEBI" id="CHEBI:149663"/>
        <dbReference type="ChEBI" id="CHEBI:149664"/>
    </reaction>
</comment>
<comment type="pathway">
    <text evidence="1">Protein modification; protein glycosylation.</text>
</comment>
<comment type="subunit">
    <text evidence="1">Homodimer and monomer. Monomer (secreted form).</text>
</comment>
<comment type="subcellular location">
    <subcellularLocation>
        <location evidence="1">Golgi apparatus</location>
        <location evidence="1">Golgi stack membrane</location>
        <topology evidence="1">Single-pass type II membrane protein</topology>
    </subcellularLocation>
    <subcellularLocation>
        <location evidence="1">Golgi apparatus</location>
    </subcellularLocation>
    <subcellularLocation>
        <location evidence="1">Secreted</location>
    </subcellularLocation>
    <text evidence="1">Membrane-bound form in trans cisternae of Golgi.</text>
</comment>
<comment type="PTM">
    <text evidence="1">N-glycosylated.</text>
</comment>
<comment type="PTM">
    <text evidence="1">Proteolytic cleavage releases a secreted glycoform of 43 kDa.</text>
</comment>
<comment type="similarity">
    <text evidence="3">Belongs to the glycosyltransferase 10 family.</text>
</comment>
<feature type="chain" id="PRO_0000221109" description="4-galactosyl-N-acetylglucosaminide 3-alpha-L-fucosyltransferase FUT6">
    <location>
        <begin position="1"/>
        <end position="359"/>
    </location>
</feature>
<feature type="topological domain" description="Cytoplasmic" evidence="2">
    <location>
        <begin position="1"/>
        <end position="14"/>
    </location>
</feature>
<feature type="transmembrane region" description="Helical; Signal-anchor for type II membrane protein" evidence="2">
    <location>
        <begin position="15"/>
        <end position="34"/>
    </location>
</feature>
<feature type="topological domain" description="Lumenal" evidence="2">
    <location>
        <begin position="35"/>
        <end position="359"/>
    </location>
</feature>
<feature type="region of interest" description="determines site-specific fucosylation" evidence="1">
    <location>
        <begin position="73"/>
        <end position="112"/>
    </location>
</feature>
<feature type="glycosylation site" description="N-linked (GlcNAc...) asparagine" evidence="2">
    <location>
        <position position="46"/>
    </location>
</feature>
<feature type="glycosylation site" description="N-linked (GlcNAc...) asparagine" evidence="2">
    <location>
        <position position="91"/>
    </location>
</feature>
<feature type="glycosylation site" description="N-linked (GlcNAc...) asparagine" evidence="2">
    <location>
        <position position="153"/>
    </location>
</feature>
<feature type="glycosylation site" description="N-linked (GlcNAc...) asparagine" evidence="2">
    <location>
        <position position="184"/>
    </location>
</feature>
<protein>
    <recommendedName>
        <fullName evidence="1">4-galactosyl-N-acetylglucosaminide 3-alpha-L-fucosyltransferase FUT6</fullName>
        <ecNumber evidence="1">2.4.1.152</ecNumber>
    </recommendedName>
    <alternativeName>
        <fullName>Fucosyltransferase 6</fullName>
    </alternativeName>
    <alternativeName>
        <fullName>Fucosyltransferase VI</fullName>
        <shortName>Fuc-TVI</shortName>
        <shortName>FucT-VI</shortName>
    </alternativeName>
    <alternativeName>
        <fullName>Galactoside 3-L-fucosyltransferase</fullName>
    </alternativeName>
</protein>
<keyword id="KW-0325">Glycoprotein</keyword>
<keyword id="KW-0328">Glycosyltransferase</keyword>
<keyword id="KW-0333">Golgi apparatus</keyword>
<keyword id="KW-0443">Lipid metabolism</keyword>
<keyword id="KW-0472">Membrane</keyword>
<keyword id="KW-1185">Reference proteome</keyword>
<keyword id="KW-0964">Secreted</keyword>
<keyword id="KW-0735">Signal-anchor</keyword>
<keyword id="KW-0808">Transferase</keyword>
<keyword id="KW-0812">Transmembrane</keyword>
<keyword id="KW-1133">Transmembrane helix</keyword>
<organism>
    <name type="scientific">Gorilla gorilla gorilla</name>
    <name type="common">Western lowland gorilla</name>
    <dbReference type="NCBI Taxonomy" id="9595"/>
    <lineage>
        <taxon>Eukaryota</taxon>
        <taxon>Metazoa</taxon>
        <taxon>Chordata</taxon>
        <taxon>Craniata</taxon>
        <taxon>Vertebrata</taxon>
        <taxon>Euteleostomi</taxon>
        <taxon>Mammalia</taxon>
        <taxon>Eutheria</taxon>
        <taxon>Euarchontoglires</taxon>
        <taxon>Primates</taxon>
        <taxon>Haplorrhini</taxon>
        <taxon>Catarrhini</taxon>
        <taxon>Hominidae</taxon>
        <taxon>Gorilla</taxon>
    </lineage>
</organism>